<name>FIMB_SCHPO</name>
<comment type="function">
    <text evidence="3 4">Binds to actin, and functionally associates with actin structures involved in the development and maintenance of cell polarity. Plays a role in cytokinesis. Plays important roles in mating and in spore formation.</text>
</comment>
<comment type="subcellular location">
    <subcellularLocation>
        <location evidence="3">Cytoplasm</location>
        <location evidence="3">Cytoskeleton</location>
        <location evidence="3">Actin patch</location>
    </subcellularLocation>
    <text>Localizes both to the cortical actin patches and to the medial ring in an F-actin-dependent manner.</text>
</comment>
<organism>
    <name type="scientific">Schizosaccharomyces pombe (strain 972 / ATCC 24843)</name>
    <name type="common">Fission yeast</name>
    <dbReference type="NCBI Taxonomy" id="284812"/>
    <lineage>
        <taxon>Eukaryota</taxon>
        <taxon>Fungi</taxon>
        <taxon>Dikarya</taxon>
        <taxon>Ascomycota</taxon>
        <taxon>Taphrinomycotina</taxon>
        <taxon>Schizosaccharomycetes</taxon>
        <taxon>Schizosaccharomycetales</taxon>
        <taxon>Schizosaccharomycetaceae</taxon>
        <taxon>Schizosaccharomyces</taxon>
    </lineage>
</organism>
<proteinExistence type="evidence at protein level"/>
<accession>O59945</accession>
<dbReference type="EMBL" id="AF053722">
    <property type="protein sequence ID" value="AAC14025.1"/>
    <property type="molecule type" value="Genomic_DNA"/>
</dbReference>
<dbReference type="EMBL" id="CU329671">
    <property type="protein sequence ID" value="CAB39801.1"/>
    <property type="molecule type" value="Genomic_DNA"/>
</dbReference>
<dbReference type="PIR" id="T39688">
    <property type="entry name" value="T39688"/>
</dbReference>
<dbReference type="RefSeq" id="NP_596289.1">
    <property type="nucleotide sequence ID" value="NM_001022211.2"/>
</dbReference>
<dbReference type="PDB" id="1RT8">
    <property type="method" value="X-ray"/>
    <property type="resolution" value="2.00 A"/>
    <property type="chains" value="A=108-614"/>
</dbReference>
<dbReference type="PDBsum" id="1RT8"/>
<dbReference type="SMR" id="O59945"/>
<dbReference type="BioGRID" id="276316">
    <property type="interactions" value="13"/>
</dbReference>
<dbReference type="FunCoup" id="O59945">
    <property type="interactions" value="138"/>
</dbReference>
<dbReference type="IntAct" id="O59945">
    <property type="interactions" value="1"/>
</dbReference>
<dbReference type="MINT" id="O59945"/>
<dbReference type="STRING" id="284812.O59945"/>
<dbReference type="iPTMnet" id="O59945"/>
<dbReference type="PaxDb" id="4896-SPBC1778.06c.1"/>
<dbReference type="EnsemblFungi" id="SPBC1778.06c.1">
    <property type="protein sequence ID" value="SPBC1778.06c.1:pep"/>
    <property type="gene ID" value="SPBC1778.06c"/>
</dbReference>
<dbReference type="GeneID" id="2539765"/>
<dbReference type="KEGG" id="spo:2539765"/>
<dbReference type="PomBase" id="SPBC1778.06c">
    <property type="gene designation" value="fim1"/>
</dbReference>
<dbReference type="VEuPathDB" id="FungiDB:SPBC1778.06c"/>
<dbReference type="eggNOG" id="KOG0046">
    <property type="taxonomic scope" value="Eukaryota"/>
</dbReference>
<dbReference type="HOGENOM" id="CLU_015284_3_0_1"/>
<dbReference type="InParanoid" id="O59945"/>
<dbReference type="OMA" id="WQLMRKN"/>
<dbReference type="PhylomeDB" id="O59945"/>
<dbReference type="EvolutionaryTrace" id="O59945"/>
<dbReference type="PRO" id="PR:O59945"/>
<dbReference type="Proteomes" id="UP000002485">
    <property type="component" value="Chromosome II"/>
</dbReference>
<dbReference type="GO" id="GO:0099079">
    <property type="term" value="C:actin body"/>
    <property type="evidence" value="ECO:0000314"/>
    <property type="project" value="PomBase"/>
</dbReference>
<dbReference type="GO" id="GO:0030479">
    <property type="term" value="C:actin cortical patch"/>
    <property type="evidence" value="ECO:0000314"/>
    <property type="project" value="PomBase"/>
</dbReference>
<dbReference type="GO" id="GO:0005884">
    <property type="term" value="C:actin filament"/>
    <property type="evidence" value="ECO:0000318"/>
    <property type="project" value="GO_Central"/>
</dbReference>
<dbReference type="GO" id="GO:0032432">
    <property type="term" value="C:actin filament bundle"/>
    <property type="evidence" value="ECO:0000318"/>
    <property type="project" value="GO_Central"/>
</dbReference>
<dbReference type="GO" id="GO:0032153">
    <property type="term" value="C:cell division site"/>
    <property type="evidence" value="ECO:0000314"/>
    <property type="project" value="PomBase"/>
</dbReference>
<dbReference type="GO" id="GO:0005737">
    <property type="term" value="C:cytoplasm"/>
    <property type="evidence" value="ECO:0000318"/>
    <property type="project" value="GO_Central"/>
</dbReference>
<dbReference type="GO" id="GO:0031097">
    <property type="term" value="C:medial cortex"/>
    <property type="evidence" value="ECO:0000314"/>
    <property type="project" value="PomBase"/>
</dbReference>
<dbReference type="GO" id="GO:0120106">
    <property type="term" value="C:mitotic actomyosin contractile ring, distal actin filament layer"/>
    <property type="evidence" value="ECO:0000314"/>
    <property type="project" value="PomBase"/>
</dbReference>
<dbReference type="GO" id="GO:0051015">
    <property type="term" value="F:actin filament binding"/>
    <property type="evidence" value="ECO:0000314"/>
    <property type="project" value="PomBase"/>
</dbReference>
<dbReference type="GO" id="GO:0005509">
    <property type="term" value="F:calcium ion binding"/>
    <property type="evidence" value="ECO:0007669"/>
    <property type="project" value="InterPro"/>
</dbReference>
<dbReference type="GO" id="GO:0051666">
    <property type="term" value="P:actin cortical patch localization"/>
    <property type="evidence" value="ECO:0000315"/>
    <property type="project" value="PomBase"/>
</dbReference>
<dbReference type="GO" id="GO:0044396">
    <property type="term" value="P:actin cortical patch organization"/>
    <property type="evidence" value="ECO:0000314"/>
    <property type="project" value="PomBase"/>
</dbReference>
<dbReference type="GO" id="GO:0051017">
    <property type="term" value="P:actin filament bundle assembly"/>
    <property type="evidence" value="ECO:0000314"/>
    <property type="project" value="PomBase"/>
</dbReference>
<dbReference type="GO" id="GO:0051639">
    <property type="term" value="P:actin filament network formation"/>
    <property type="evidence" value="ECO:0000318"/>
    <property type="project" value="GO_Central"/>
</dbReference>
<dbReference type="GO" id="GO:0044837">
    <property type="term" value="P:actomyosin contractile ring organization"/>
    <property type="evidence" value="ECO:0000315"/>
    <property type="project" value="PomBase"/>
</dbReference>
<dbReference type="GO" id="GO:0006897">
    <property type="term" value="P:endocytosis"/>
    <property type="evidence" value="ECO:0000315"/>
    <property type="project" value="PomBase"/>
</dbReference>
<dbReference type="GO" id="GO:0110009">
    <property type="term" value="P:formin-nucleated actin cable organization"/>
    <property type="evidence" value="ECO:0000314"/>
    <property type="project" value="PomBase"/>
</dbReference>
<dbReference type="CDD" id="cd21294">
    <property type="entry name" value="CH_FIMB_rpt1"/>
    <property type="match status" value="1"/>
</dbReference>
<dbReference type="CDD" id="cd21297">
    <property type="entry name" value="CH_FIMB_rpt2"/>
    <property type="match status" value="1"/>
</dbReference>
<dbReference type="CDD" id="cd21300">
    <property type="entry name" value="CH_FIMB_rpt3"/>
    <property type="match status" value="1"/>
</dbReference>
<dbReference type="CDD" id="cd21303">
    <property type="entry name" value="CH_FIMB_rpt4"/>
    <property type="match status" value="1"/>
</dbReference>
<dbReference type="FunFam" id="1.10.418.10:FF:000042">
    <property type="entry name" value="Fimbrin, putative"/>
    <property type="match status" value="1"/>
</dbReference>
<dbReference type="FunFam" id="1.10.418.10:FF:000010">
    <property type="entry name" value="Plastin-3 isoform 1"/>
    <property type="match status" value="1"/>
</dbReference>
<dbReference type="FunFam" id="1.10.418.10:FF:000016">
    <property type="entry name" value="Probable fimbrin"/>
    <property type="match status" value="1"/>
</dbReference>
<dbReference type="FunFam" id="1.10.418.10:FF:000027">
    <property type="entry name" value="Probable fimbrin"/>
    <property type="match status" value="1"/>
</dbReference>
<dbReference type="Gene3D" id="1.10.418.10">
    <property type="entry name" value="Calponin-like domain"/>
    <property type="match status" value="4"/>
</dbReference>
<dbReference type="Gene3D" id="1.10.238.10">
    <property type="entry name" value="EF-hand"/>
    <property type="match status" value="1"/>
</dbReference>
<dbReference type="InterPro" id="IPR001589">
    <property type="entry name" value="Actinin_actin-bd_CS"/>
</dbReference>
<dbReference type="InterPro" id="IPR001715">
    <property type="entry name" value="CH_dom"/>
</dbReference>
<dbReference type="InterPro" id="IPR036872">
    <property type="entry name" value="CH_dom_sf"/>
</dbReference>
<dbReference type="InterPro" id="IPR011992">
    <property type="entry name" value="EF-hand-dom_pair"/>
</dbReference>
<dbReference type="InterPro" id="IPR002048">
    <property type="entry name" value="EF_hand_dom"/>
</dbReference>
<dbReference type="InterPro" id="IPR039959">
    <property type="entry name" value="Fimbrin/Plastin"/>
</dbReference>
<dbReference type="PANTHER" id="PTHR19961:SF18">
    <property type="entry name" value="FI19014P1"/>
    <property type="match status" value="1"/>
</dbReference>
<dbReference type="PANTHER" id="PTHR19961">
    <property type="entry name" value="FIMBRIN/PLASTIN"/>
    <property type="match status" value="1"/>
</dbReference>
<dbReference type="Pfam" id="PF00307">
    <property type="entry name" value="CH"/>
    <property type="match status" value="4"/>
</dbReference>
<dbReference type="SMART" id="SM00033">
    <property type="entry name" value="CH"/>
    <property type="match status" value="4"/>
</dbReference>
<dbReference type="SUPFAM" id="SSF47576">
    <property type="entry name" value="Calponin-homology domain, CH-domain"/>
    <property type="match status" value="1"/>
</dbReference>
<dbReference type="SUPFAM" id="SSF47473">
    <property type="entry name" value="EF-hand"/>
    <property type="match status" value="1"/>
</dbReference>
<dbReference type="PROSITE" id="PS00019">
    <property type="entry name" value="ACTININ_1"/>
    <property type="match status" value="1"/>
</dbReference>
<dbReference type="PROSITE" id="PS00020">
    <property type="entry name" value="ACTININ_2"/>
    <property type="match status" value="1"/>
</dbReference>
<dbReference type="PROSITE" id="PS50021">
    <property type="entry name" value="CH"/>
    <property type="match status" value="4"/>
</dbReference>
<dbReference type="PROSITE" id="PS50222">
    <property type="entry name" value="EF_HAND_2"/>
    <property type="match status" value="2"/>
</dbReference>
<evidence type="ECO:0000255" key="1">
    <source>
        <dbReference type="PROSITE-ProRule" id="PRU00044"/>
    </source>
</evidence>
<evidence type="ECO:0000255" key="2">
    <source>
        <dbReference type="PROSITE-ProRule" id="PRU00448"/>
    </source>
</evidence>
<evidence type="ECO:0000269" key="3">
    <source>
    </source>
</evidence>
<evidence type="ECO:0000269" key="4">
    <source>
    </source>
</evidence>
<evidence type="ECO:0000305" key="5"/>
<evidence type="ECO:0007829" key="6">
    <source>
        <dbReference type="PDB" id="1RT8"/>
    </source>
</evidence>
<reference key="1">
    <citation type="journal article" date="2001" name="Mol. Biol. Cell">
        <title>Roles of a fimbrin and an alpha-actinin-like protein in fission yeast cell polarization and cytokinesis.</title>
        <authorList>
            <person name="Wu J.-Q."/>
            <person name="Baehler J."/>
            <person name="Pringle J.R."/>
        </authorList>
    </citation>
    <scope>NUCLEOTIDE SEQUENCE [GENOMIC DNA]</scope>
    <scope>FUNCTION</scope>
    <scope>SUBCELLULAR LOCATION</scope>
    <source>
        <strain>972 / ATCC 24843</strain>
    </source>
</reference>
<reference key="2">
    <citation type="journal article" date="2002" name="Nature">
        <title>The genome sequence of Schizosaccharomyces pombe.</title>
        <authorList>
            <person name="Wood V."/>
            <person name="Gwilliam R."/>
            <person name="Rajandream M.A."/>
            <person name="Lyne M.H."/>
            <person name="Lyne R."/>
            <person name="Stewart A."/>
            <person name="Sgouros J.G."/>
            <person name="Peat N."/>
            <person name="Hayles J."/>
            <person name="Baker S.G."/>
            <person name="Basham D."/>
            <person name="Bowman S."/>
            <person name="Brooks K."/>
            <person name="Brown D."/>
            <person name="Brown S."/>
            <person name="Chillingworth T."/>
            <person name="Churcher C.M."/>
            <person name="Collins M."/>
            <person name="Connor R."/>
            <person name="Cronin A."/>
            <person name="Davis P."/>
            <person name="Feltwell T."/>
            <person name="Fraser A."/>
            <person name="Gentles S."/>
            <person name="Goble A."/>
            <person name="Hamlin N."/>
            <person name="Harris D.E."/>
            <person name="Hidalgo J."/>
            <person name="Hodgson G."/>
            <person name="Holroyd S."/>
            <person name="Hornsby T."/>
            <person name="Howarth S."/>
            <person name="Huckle E.J."/>
            <person name="Hunt S."/>
            <person name="Jagels K."/>
            <person name="James K.D."/>
            <person name="Jones L."/>
            <person name="Jones M."/>
            <person name="Leather S."/>
            <person name="McDonald S."/>
            <person name="McLean J."/>
            <person name="Mooney P."/>
            <person name="Moule S."/>
            <person name="Mungall K.L."/>
            <person name="Murphy L.D."/>
            <person name="Niblett D."/>
            <person name="Odell C."/>
            <person name="Oliver K."/>
            <person name="O'Neil S."/>
            <person name="Pearson D."/>
            <person name="Quail M.A."/>
            <person name="Rabbinowitsch E."/>
            <person name="Rutherford K.M."/>
            <person name="Rutter S."/>
            <person name="Saunders D."/>
            <person name="Seeger K."/>
            <person name="Sharp S."/>
            <person name="Skelton J."/>
            <person name="Simmonds M.N."/>
            <person name="Squares R."/>
            <person name="Squares S."/>
            <person name="Stevens K."/>
            <person name="Taylor K."/>
            <person name="Taylor R.G."/>
            <person name="Tivey A."/>
            <person name="Walsh S.V."/>
            <person name="Warren T."/>
            <person name="Whitehead S."/>
            <person name="Woodward J.R."/>
            <person name="Volckaert G."/>
            <person name="Aert R."/>
            <person name="Robben J."/>
            <person name="Grymonprez B."/>
            <person name="Weltjens I."/>
            <person name="Vanstreels E."/>
            <person name="Rieger M."/>
            <person name="Schaefer M."/>
            <person name="Mueller-Auer S."/>
            <person name="Gabel C."/>
            <person name="Fuchs M."/>
            <person name="Duesterhoeft A."/>
            <person name="Fritzc C."/>
            <person name="Holzer E."/>
            <person name="Moestl D."/>
            <person name="Hilbert H."/>
            <person name="Borzym K."/>
            <person name="Langer I."/>
            <person name="Beck A."/>
            <person name="Lehrach H."/>
            <person name="Reinhardt R."/>
            <person name="Pohl T.M."/>
            <person name="Eger P."/>
            <person name="Zimmermann W."/>
            <person name="Wedler H."/>
            <person name="Wambutt R."/>
            <person name="Purnelle B."/>
            <person name="Goffeau A."/>
            <person name="Cadieu E."/>
            <person name="Dreano S."/>
            <person name="Gloux S."/>
            <person name="Lelaure V."/>
            <person name="Mottier S."/>
            <person name="Galibert F."/>
            <person name="Aves S.J."/>
            <person name="Xiang Z."/>
            <person name="Hunt C."/>
            <person name="Moore K."/>
            <person name="Hurst S.M."/>
            <person name="Lucas M."/>
            <person name="Rochet M."/>
            <person name="Gaillardin C."/>
            <person name="Tallada V.A."/>
            <person name="Garzon A."/>
            <person name="Thode G."/>
            <person name="Daga R.R."/>
            <person name="Cruzado L."/>
            <person name="Jimenez J."/>
            <person name="Sanchez M."/>
            <person name="del Rey F."/>
            <person name="Benito J."/>
            <person name="Dominguez A."/>
            <person name="Revuelta J.L."/>
            <person name="Moreno S."/>
            <person name="Armstrong J."/>
            <person name="Forsburg S.L."/>
            <person name="Cerutti L."/>
            <person name="Lowe T."/>
            <person name="McCombie W.R."/>
            <person name="Paulsen I."/>
            <person name="Potashkin J."/>
            <person name="Shpakovski G.V."/>
            <person name="Ussery D."/>
            <person name="Barrell B.G."/>
            <person name="Nurse P."/>
        </authorList>
    </citation>
    <scope>NUCLEOTIDE SEQUENCE [LARGE SCALE GENOMIC DNA]</scope>
    <source>
        <strain>972 / ATCC 24843</strain>
    </source>
</reference>
<reference key="3">
    <citation type="journal article" date="2001" name="Mol. Biol. Cell">
        <title>Interactions among a fimbrin, a capping protein, and an actin-depolymerizing factor in organization of the fission yeast actin cytoskeleton.</title>
        <authorList>
            <person name="Nakano K."/>
            <person name="Satoh K."/>
            <person name="Morimatsu A."/>
            <person name="Ohnuma M."/>
            <person name="Mabuchi I."/>
        </authorList>
    </citation>
    <scope>FUNCTION</scope>
</reference>
<reference key="4">
    <citation type="journal article" date="2004" name="Structure">
        <title>Structure of the actin crosslinking core of fimbrin.</title>
        <authorList>
            <person name="Klein M.G."/>
            <person name="Shi W."/>
            <person name="Ramagopal U."/>
            <person name="Tseng Y."/>
            <person name="Wirtz D."/>
            <person name="Kovar D.R."/>
            <person name="Staiger C.J."/>
            <person name="Almo S.C."/>
        </authorList>
    </citation>
    <scope>X-RAY CRYSTALLOGRAPHY (2.0 ANGSTROMS) OF 102-614</scope>
</reference>
<gene>
    <name type="primary">fim1</name>
    <name type="ORF">SPBC1778.06c</name>
</gene>
<sequence length="614" mass="68617">MLALKLQKKYPELTNEEILTLTDQFNKLDVDGKGYLDQPTTIKAFEDSKKGSYDEVREAIREVNVDSSGRVEPEDFVGIFNVLKKGVEGTEVKKGRITIKGSSSSVSHTINEEERREFIKHINSVLAGDPDVGSRVPINTETFEFFDQCKDGLILSKLINDSVPDTIDERVLNKQRNNKPLDNFKCIENNNVVINSAKAMGGISITNIGAGDILEGREHLILGLVWQIIRRGLLGKIDITLHPELYRLLEEDETLDQFLRLPPEKILLRWFNYHLKAANWPRTVSNFSKDVSDGENYTVLLNQLAPELCSRAPLQTTDVLQRAEQVLQNAEKLDCRKYLTPTAMVAGNPKLNLAFVAHLFNTHPGLEPLNEEEKPEIEPFDAEGEREARVFTLWLNSLDVTPSIHDFFNNLRDGLILLQAYDKITPNTVNWKKVNKAPASGDEMMRFKAVENCNYAVDLGKNQGFSLVGIQGADITDGSRTLTLALVWQMMRMNITKTLHSLSRGGKTLSDSDMVAWANSMAAKGGKGSQIRSFRDPSISTGVFVLDVLHGIKSEYVDYNLVTDGSTEELAIQNARLAISIARKLGAVIFILPEDIVAVRPRLVLHFIGSLMAV</sequence>
<feature type="chain" id="PRO_0000073756" description="Fimbrin">
    <location>
        <begin position="1"/>
        <end position="614"/>
    </location>
</feature>
<feature type="domain" description="EF-hand 1" evidence="2">
    <location>
        <begin position="16"/>
        <end position="50"/>
    </location>
</feature>
<feature type="domain" description="EF-hand 2" evidence="2">
    <location>
        <begin position="51"/>
        <end position="86"/>
    </location>
</feature>
<feature type="domain" description="Calponin-homology (CH) 1" evidence="1">
    <location>
        <begin position="112"/>
        <end position="233"/>
    </location>
</feature>
<feature type="domain" description="Calponin-homology (CH) 2" evidence="1">
    <location>
        <begin position="261"/>
        <end position="364"/>
    </location>
</feature>
<feature type="domain" description="Calponin-homology (CH) 3" evidence="1">
    <location>
        <begin position="385"/>
        <end position="495"/>
    </location>
</feature>
<feature type="domain" description="Calponin-homology (CH) 4" evidence="1">
    <location>
        <begin position="508"/>
        <end position="614"/>
    </location>
</feature>
<feature type="region of interest" description="Actin-binding 1">
    <location>
        <begin position="98"/>
        <end position="368"/>
    </location>
</feature>
<feature type="region of interest" description="Actin-binding 2">
    <location>
        <begin position="369"/>
        <end position="614"/>
    </location>
</feature>
<feature type="binding site" evidence="5">
    <location>
        <position position="29"/>
    </location>
    <ligand>
        <name>Ca(2+)</name>
        <dbReference type="ChEBI" id="CHEBI:29108"/>
        <label>1</label>
    </ligand>
</feature>
<feature type="binding site" evidence="5">
    <location>
        <position position="31"/>
    </location>
    <ligand>
        <name>Ca(2+)</name>
        <dbReference type="ChEBI" id="CHEBI:29108"/>
        <label>1</label>
    </ligand>
</feature>
<feature type="binding site" evidence="5">
    <location>
        <position position="35"/>
    </location>
    <ligand>
        <name>Ca(2+)</name>
        <dbReference type="ChEBI" id="CHEBI:29108"/>
        <label>1</label>
    </ligand>
</feature>
<feature type="binding site" evidence="5">
    <location>
        <position position="40"/>
    </location>
    <ligand>
        <name>Ca(2+)</name>
        <dbReference type="ChEBI" id="CHEBI:29108"/>
        <label>1</label>
    </ligand>
</feature>
<feature type="binding site" evidence="5">
    <location>
        <position position="66"/>
    </location>
    <ligand>
        <name>Ca(2+)</name>
        <dbReference type="ChEBI" id="CHEBI:29108"/>
        <label>2</label>
    </ligand>
</feature>
<feature type="binding site" evidence="5">
    <location>
        <position position="68"/>
    </location>
    <ligand>
        <name>Ca(2+)</name>
        <dbReference type="ChEBI" id="CHEBI:29108"/>
        <label>2</label>
    </ligand>
</feature>
<feature type="binding site" evidence="5">
    <location>
        <position position="70"/>
    </location>
    <ligand>
        <name>Ca(2+)</name>
        <dbReference type="ChEBI" id="CHEBI:29108"/>
        <label>2</label>
    </ligand>
</feature>
<feature type="binding site" evidence="5">
    <location>
        <position position="75"/>
    </location>
    <ligand>
        <name>Ca(2+)</name>
        <dbReference type="ChEBI" id="CHEBI:29108"/>
        <label>2</label>
    </ligand>
</feature>
<feature type="helix" evidence="6">
    <location>
        <begin position="112"/>
        <end position="126"/>
    </location>
</feature>
<feature type="turn" evidence="6">
    <location>
        <begin position="130"/>
        <end position="132"/>
    </location>
</feature>
<feature type="helix" evidence="6">
    <location>
        <begin position="133"/>
        <end position="135"/>
    </location>
</feature>
<feature type="helix" evidence="6">
    <location>
        <begin position="144"/>
        <end position="148"/>
    </location>
</feature>
<feature type="turn" evidence="6">
    <location>
        <begin position="149"/>
        <end position="151"/>
    </location>
</feature>
<feature type="helix" evidence="6">
    <location>
        <begin position="153"/>
        <end position="162"/>
    </location>
</feature>
<feature type="helix" evidence="6">
    <location>
        <begin position="169"/>
        <end position="171"/>
    </location>
</feature>
<feature type="helix" evidence="6">
    <location>
        <begin position="183"/>
        <end position="200"/>
    </location>
</feature>
<feature type="helix" evidence="6">
    <location>
        <begin position="210"/>
        <end position="214"/>
    </location>
</feature>
<feature type="helix" evidence="6">
    <location>
        <begin position="218"/>
        <end position="232"/>
    </location>
</feature>
<feature type="helix" evidence="6">
    <location>
        <begin position="255"/>
        <end position="258"/>
    </location>
</feature>
<feature type="helix" evidence="6">
    <location>
        <begin position="263"/>
        <end position="277"/>
    </location>
</feature>
<feature type="helix" evidence="6">
    <location>
        <begin position="289"/>
        <end position="291"/>
    </location>
</feature>
<feature type="helix" evidence="6">
    <location>
        <begin position="295"/>
        <end position="304"/>
    </location>
</feature>
<feature type="turn" evidence="6">
    <location>
        <begin position="306"/>
        <end position="308"/>
    </location>
</feature>
<feature type="helix" evidence="6">
    <location>
        <begin position="312"/>
        <end position="315"/>
    </location>
</feature>
<feature type="helix" evidence="6">
    <location>
        <begin position="319"/>
        <end position="331"/>
    </location>
</feature>
<feature type="turn" evidence="6">
    <location>
        <begin position="332"/>
        <end position="334"/>
    </location>
</feature>
<feature type="helix" evidence="6">
    <location>
        <begin position="341"/>
        <end position="345"/>
    </location>
</feature>
<feature type="helix" evidence="6">
    <location>
        <begin position="349"/>
        <end position="362"/>
    </location>
</feature>
<feature type="helix" evidence="6">
    <location>
        <begin position="383"/>
        <end position="397"/>
    </location>
</feature>
<feature type="helix" evidence="6">
    <location>
        <begin position="407"/>
        <end position="410"/>
    </location>
</feature>
<feature type="turn" evidence="6">
    <location>
        <begin position="411"/>
        <end position="413"/>
    </location>
</feature>
<feature type="helix" evidence="6">
    <location>
        <begin position="415"/>
        <end position="424"/>
    </location>
</feature>
<feature type="helix" evidence="6">
    <location>
        <begin position="431"/>
        <end position="433"/>
    </location>
</feature>
<feature type="helix" evidence="6">
    <location>
        <begin position="446"/>
        <end position="462"/>
    </location>
</feature>
<feature type="helix" evidence="6">
    <location>
        <begin position="472"/>
        <end position="476"/>
    </location>
</feature>
<feature type="helix" evidence="6">
    <location>
        <begin position="480"/>
        <end position="498"/>
    </location>
</feature>
<feature type="helix" evidence="6">
    <location>
        <begin position="511"/>
        <end position="522"/>
    </location>
</feature>
<feature type="turn" evidence="6">
    <location>
        <begin position="523"/>
        <end position="525"/>
    </location>
</feature>
<feature type="helix" evidence="6">
    <location>
        <begin position="537"/>
        <end position="541"/>
    </location>
</feature>
<feature type="helix" evidence="6">
    <location>
        <begin position="543"/>
        <end position="552"/>
    </location>
</feature>
<feature type="helix" evidence="6">
    <location>
        <begin position="554"/>
        <end position="556"/>
    </location>
</feature>
<feature type="helix" evidence="6">
    <location>
        <begin position="559"/>
        <end position="561"/>
    </location>
</feature>
<feature type="helix" evidence="6">
    <location>
        <begin position="568"/>
        <end position="584"/>
    </location>
</feature>
<feature type="helix" evidence="6">
    <location>
        <begin position="593"/>
        <end position="597"/>
    </location>
</feature>
<feature type="helix" evidence="6">
    <location>
        <begin position="601"/>
        <end position="612"/>
    </location>
</feature>
<protein>
    <recommendedName>
        <fullName>Fimbrin</fullName>
    </recommendedName>
</protein>
<keyword id="KW-0002">3D-structure</keyword>
<keyword id="KW-0009">Actin-binding</keyword>
<keyword id="KW-0106">Calcium</keyword>
<keyword id="KW-0963">Cytoplasm</keyword>
<keyword id="KW-0206">Cytoskeleton</keyword>
<keyword id="KW-0479">Metal-binding</keyword>
<keyword id="KW-1185">Reference proteome</keyword>
<keyword id="KW-0677">Repeat</keyword>